<name>PQQB_PSEAB</name>
<dbReference type="EMBL" id="CP000438">
    <property type="protein sequence ID" value="ABJ11173.1"/>
    <property type="molecule type" value="Genomic_DNA"/>
</dbReference>
<dbReference type="RefSeq" id="WP_003106464.1">
    <property type="nucleotide sequence ID" value="NZ_CP034244.1"/>
</dbReference>
<dbReference type="SMR" id="Q02LD3"/>
<dbReference type="KEGG" id="pau:PA14_38820"/>
<dbReference type="PseudoCAP" id="PA14_38820"/>
<dbReference type="HOGENOM" id="CLU_061120_0_0_6"/>
<dbReference type="BioCyc" id="PAER208963:G1G74-3262-MONOMER"/>
<dbReference type="UniPathway" id="UPA00539"/>
<dbReference type="Proteomes" id="UP000000653">
    <property type="component" value="Chromosome"/>
</dbReference>
<dbReference type="GO" id="GO:0018189">
    <property type="term" value="P:pyrroloquinoline quinone biosynthetic process"/>
    <property type="evidence" value="ECO:0007669"/>
    <property type="project" value="UniProtKB-UniRule"/>
</dbReference>
<dbReference type="CDD" id="cd16274">
    <property type="entry name" value="PQQB-like_MBL-fold"/>
    <property type="match status" value="1"/>
</dbReference>
<dbReference type="Gene3D" id="3.60.15.10">
    <property type="entry name" value="Ribonuclease Z/Hydroxyacylglutathione hydrolase-like"/>
    <property type="match status" value="1"/>
</dbReference>
<dbReference type="HAMAP" id="MF_00653">
    <property type="entry name" value="PQQ_syn_PqqB"/>
    <property type="match status" value="1"/>
</dbReference>
<dbReference type="InterPro" id="IPR001279">
    <property type="entry name" value="Metallo-B-lactamas"/>
</dbReference>
<dbReference type="InterPro" id="IPR011842">
    <property type="entry name" value="PQQ_synth_PqqB"/>
</dbReference>
<dbReference type="InterPro" id="IPR036866">
    <property type="entry name" value="RibonucZ/Hydroxyglut_hydro"/>
</dbReference>
<dbReference type="NCBIfam" id="TIGR02108">
    <property type="entry name" value="PQQ_syn_pqqB"/>
    <property type="match status" value="1"/>
</dbReference>
<dbReference type="PANTHER" id="PTHR42663:SF7">
    <property type="entry name" value="COENZYME PQQ SYNTHESIS PROTEIN B"/>
    <property type="match status" value="1"/>
</dbReference>
<dbReference type="PANTHER" id="PTHR42663">
    <property type="entry name" value="HYDROLASE C777.06C-RELATED-RELATED"/>
    <property type="match status" value="1"/>
</dbReference>
<dbReference type="Pfam" id="PF12706">
    <property type="entry name" value="Lactamase_B_2"/>
    <property type="match status" value="1"/>
</dbReference>
<dbReference type="SUPFAM" id="SSF56281">
    <property type="entry name" value="Metallo-hydrolase/oxidoreductase"/>
    <property type="match status" value="1"/>
</dbReference>
<feature type="chain" id="PRO_1000061653" description="Coenzyme PQQ synthesis protein B">
    <location>
        <begin position="1"/>
        <end position="304"/>
    </location>
</feature>
<proteinExistence type="inferred from homology"/>
<reference key="1">
    <citation type="journal article" date="2006" name="Genome Biol.">
        <title>Genomic analysis reveals that Pseudomonas aeruginosa virulence is combinatorial.</title>
        <authorList>
            <person name="Lee D.G."/>
            <person name="Urbach J.M."/>
            <person name="Wu G."/>
            <person name="Liberati N.T."/>
            <person name="Feinbaum R.L."/>
            <person name="Miyata S."/>
            <person name="Diggins L.T."/>
            <person name="He J."/>
            <person name="Saucier M."/>
            <person name="Deziel E."/>
            <person name="Friedman L."/>
            <person name="Li L."/>
            <person name="Grills G."/>
            <person name="Montgomery K."/>
            <person name="Kucherlapati R."/>
            <person name="Rahme L.G."/>
            <person name="Ausubel F.M."/>
        </authorList>
    </citation>
    <scope>NUCLEOTIDE SEQUENCE [LARGE SCALE GENOMIC DNA]</scope>
    <source>
        <strain>UCBPP-PA14</strain>
    </source>
</reference>
<organism>
    <name type="scientific">Pseudomonas aeruginosa (strain UCBPP-PA14)</name>
    <dbReference type="NCBI Taxonomy" id="208963"/>
    <lineage>
        <taxon>Bacteria</taxon>
        <taxon>Pseudomonadati</taxon>
        <taxon>Pseudomonadota</taxon>
        <taxon>Gammaproteobacteria</taxon>
        <taxon>Pseudomonadales</taxon>
        <taxon>Pseudomonadaceae</taxon>
        <taxon>Pseudomonas</taxon>
    </lineage>
</organism>
<gene>
    <name evidence="1" type="primary">pqqB</name>
    <name type="ordered locus">PA14_38820</name>
</gene>
<sequence>MHIRILGSAAGGGFPQWNCNCRNCRGVRDGSVAAQPRTQSSIALSDDGERWILCNASPDIRAQIAAFPALQPARRPRDTAIGAIVLLDSQIDHTTGLLSLREGCPHEVWCTQMVHQDLSEGFPLFPMLSHWNGGLRHRPIALDGEPFAIPACPRLRFTAIPLRSSAPPYSPHRGDPHPGDNIGLFVEDLDSAGTLFYAPGLGEVDEALLEWMRRADCLLVDGTLWRDDEMLVCEVGDKLGRQMGHLAQSGPGGMLEVLAKVPAARKVLIHINNTNPILDTASAERAELDASGIEVAWDGMHIQL</sequence>
<protein>
    <recommendedName>
        <fullName evidence="1">Coenzyme PQQ synthesis protein B</fullName>
    </recommendedName>
    <alternativeName>
        <fullName evidence="1">Pyrroloquinoline quinone biosynthesis protein B</fullName>
    </alternativeName>
</protein>
<keyword id="KW-0884">PQQ biosynthesis</keyword>
<keyword id="KW-0813">Transport</keyword>
<comment type="function">
    <text evidence="1">May be involved in the transport of PQQ or its precursor to the periplasm.</text>
</comment>
<comment type="pathway">
    <text evidence="1">Cofactor biosynthesis; pyrroloquinoline quinone biosynthesis.</text>
</comment>
<comment type="similarity">
    <text evidence="1">Belongs to the PqqB family.</text>
</comment>
<evidence type="ECO:0000255" key="1">
    <source>
        <dbReference type="HAMAP-Rule" id="MF_00653"/>
    </source>
</evidence>
<accession>Q02LD3</accession>